<name>SYFA_PSESM</name>
<sequence length="338" mass="38180">MENLDALVSQALEAVQSAEDINALEQIRVHYLGKKGELTQVMKTLGNLPAEERPHVGALINVAKERVTEVLNARKASFEQAELTAKLAAECIDVTLPGRGQTSGGLHPITRTLERIEQFFTHIGYGIAEGPEVEDDYHNFEALNIPGHHPARSMHDTFYFNANMLLRTHTSPVQVRTMESQQPPIRIVCPGRVYRSDSDITHSPMFHQIEGLLVDRDINFADLKGTIEEFLRVFFEKELAVRFRPSYFPFTEPSAEVDMECVMCSGKGCRVCKQTGWLEVMGCGMVHPNVLRMSGIDPEEFQGFAFGMGVERLAMLRYGVNDLRLFFDNDLRFLAQFR</sequence>
<evidence type="ECO:0000255" key="1">
    <source>
        <dbReference type="HAMAP-Rule" id="MF_00281"/>
    </source>
</evidence>
<comment type="catalytic activity">
    <reaction evidence="1">
        <text>tRNA(Phe) + L-phenylalanine + ATP = L-phenylalanyl-tRNA(Phe) + AMP + diphosphate + H(+)</text>
        <dbReference type="Rhea" id="RHEA:19413"/>
        <dbReference type="Rhea" id="RHEA-COMP:9668"/>
        <dbReference type="Rhea" id="RHEA-COMP:9699"/>
        <dbReference type="ChEBI" id="CHEBI:15378"/>
        <dbReference type="ChEBI" id="CHEBI:30616"/>
        <dbReference type="ChEBI" id="CHEBI:33019"/>
        <dbReference type="ChEBI" id="CHEBI:58095"/>
        <dbReference type="ChEBI" id="CHEBI:78442"/>
        <dbReference type="ChEBI" id="CHEBI:78531"/>
        <dbReference type="ChEBI" id="CHEBI:456215"/>
        <dbReference type="EC" id="6.1.1.20"/>
    </reaction>
</comment>
<comment type="cofactor">
    <cofactor evidence="1">
        <name>Mg(2+)</name>
        <dbReference type="ChEBI" id="CHEBI:18420"/>
    </cofactor>
    <text evidence="1">Binds 2 magnesium ions per tetramer.</text>
</comment>
<comment type="subunit">
    <text evidence="1">Tetramer of two alpha and two beta subunits.</text>
</comment>
<comment type="subcellular location">
    <subcellularLocation>
        <location evidence="1">Cytoplasm</location>
    </subcellularLocation>
</comment>
<comment type="similarity">
    <text evidence="1">Belongs to the class-II aminoacyl-tRNA synthetase family. Phe-tRNA synthetase alpha subunit type 1 subfamily.</text>
</comment>
<gene>
    <name evidence="1" type="primary">pheS</name>
    <name type="ordered locus">PSPTO_2382</name>
</gene>
<organism>
    <name type="scientific">Pseudomonas syringae pv. tomato (strain ATCC BAA-871 / DC3000)</name>
    <dbReference type="NCBI Taxonomy" id="223283"/>
    <lineage>
        <taxon>Bacteria</taxon>
        <taxon>Pseudomonadati</taxon>
        <taxon>Pseudomonadota</taxon>
        <taxon>Gammaproteobacteria</taxon>
        <taxon>Pseudomonadales</taxon>
        <taxon>Pseudomonadaceae</taxon>
        <taxon>Pseudomonas</taxon>
    </lineage>
</organism>
<dbReference type="EC" id="6.1.1.20" evidence="1"/>
<dbReference type="EMBL" id="AE016853">
    <property type="protein sequence ID" value="AAO55893.1"/>
    <property type="molecule type" value="Genomic_DNA"/>
</dbReference>
<dbReference type="RefSeq" id="NP_792198.1">
    <property type="nucleotide sequence ID" value="NC_004578.1"/>
</dbReference>
<dbReference type="RefSeq" id="WP_003382398.1">
    <property type="nucleotide sequence ID" value="NC_004578.1"/>
</dbReference>
<dbReference type="SMR" id="Q883H8"/>
<dbReference type="STRING" id="223283.PSPTO_2382"/>
<dbReference type="GeneID" id="61792806"/>
<dbReference type="KEGG" id="pst:PSPTO_2382"/>
<dbReference type="PATRIC" id="fig|223283.9.peg.2417"/>
<dbReference type="eggNOG" id="COG0016">
    <property type="taxonomic scope" value="Bacteria"/>
</dbReference>
<dbReference type="HOGENOM" id="CLU_025086_0_1_6"/>
<dbReference type="OrthoDB" id="9800719at2"/>
<dbReference type="PhylomeDB" id="Q883H8"/>
<dbReference type="Proteomes" id="UP000002515">
    <property type="component" value="Chromosome"/>
</dbReference>
<dbReference type="GO" id="GO:0005737">
    <property type="term" value="C:cytoplasm"/>
    <property type="evidence" value="ECO:0007669"/>
    <property type="project" value="UniProtKB-SubCell"/>
</dbReference>
<dbReference type="GO" id="GO:0005524">
    <property type="term" value="F:ATP binding"/>
    <property type="evidence" value="ECO:0007669"/>
    <property type="project" value="UniProtKB-UniRule"/>
</dbReference>
<dbReference type="GO" id="GO:0000287">
    <property type="term" value="F:magnesium ion binding"/>
    <property type="evidence" value="ECO:0007669"/>
    <property type="project" value="UniProtKB-UniRule"/>
</dbReference>
<dbReference type="GO" id="GO:0004826">
    <property type="term" value="F:phenylalanine-tRNA ligase activity"/>
    <property type="evidence" value="ECO:0007669"/>
    <property type="project" value="UniProtKB-UniRule"/>
</dbReference>
<dbReference type="GO" id="GO:0000049">
    <property type="term" value="F:tRNA binding"/>
    <property type="evidence" value="ECO:0007669"/>
    <property type="project" value="InterPro"/>
</dbReference>
<dbReference type="GO" id="GO:0006432">
    <property type="term" value="P:phenylalanyl-tRNA aminoacylation"/>
    <property type="evidence" value="ECO:0007669"/>
    <property type="project" value="UniProtKB-UniRule"/>
</dbReference>
<dbReference type="CDD" id="cd00496">
    <property type="entry name" value="PheRS_alpha_core"/>
    <property type="match status" value="1"/>
</dbReference>
<dbReference type="FunFam" id="3.30.930.10:FF:000003">
    <property type="entry name" value="Phenylalanine--tRNA ligase alpha subunit"/>
    <property type="match status" value="1"/>
</dbReference>
<dbReference type="Gene3D" id="3.30.930.10">
    <property type="entry name" value="Bira Bifunctional Protein, Domain 2"/>
    <property type="match status" value="1"/>
</dbReference>
<dbReference type="HAMAP" id="MF_00281">
    <property type="entry name" value="Phe_tRNA_synth_alpha1"/>
    <property type="match status" value="1"/>
</dbReference>
<dbReference type="InterPro" id="IPR006195">
    <property type="entry name" value="aa-tRNA-synth_II"/>
</dbReference>
<dbReference type="InterPro" id="IPR045864">
    <property type="entry name" value="aa-tRNA-synth_II/BPL/LPL"/>
</dbReference>
<dbReference type="InterPro" id="IPR004529">
    <property type="entry name" value="Phe-tRNA-synth_IIc_asu"/>
</dbReference>
<dbReference type="InterPro" id="IPR004188">
    <property type="entry name" value="Phe-tRNA_ligase_II_N"/>
</dbReference>
<dbReference type="InterPro" id="IPR022911">
    <property type="entry name" value="Phe_tRNA_ligase_alpha1_bac"/>
</dbReference>
<dbReference type="InterPro" id="IPR002319">
    <property type="entry name" value="Phenylalanyl-tRNA_Synthase"/>
</dbReference>
<dbReference type="InterPro" id="IPR010978">
    <property type="entry name" value="tRNA-bd_arm"/>
</dbReference>
<dbReference type="NCBIfam" id="TIGR00468">
    <property type="entry name" value="pheS"/>
    <property type="match status" value="1"/>
</dbReference>
<dbReference type="PANTHER" id="PTHR11538:SF41">
    <property type="entry name" value="PHENYLALANINE--TRNA LIGASE, MITOCHONDRIAL"/>
    <property type="match status" value="1"/>
</dbReference>
<dbReference type="PANTHER" id="PTHR11538">
    <property type="entry name" value="PHENYLALANYL-TRNA SYNTHETASE"/>
    <property type="match status" value="1"/>
</dbReference>
<dbReference type="Pfam" id="PF02912">
    <property type="entry name" value="Phe_tRNA-synt_N"/>
    <property type="match status" value="1"/>
</dbReference>
<dbReference type="Pfam" id="PF01409">
    <property type="entry name" value="tRNA-synt_2d"/>
    <property type="match status" value="1"/>
</dbReference>
<dbReference type="SUPFAM" id="SSF55681">
    <property type="entry name" value="Class II aaRS and biotin synthetases"/>
    <property type="match status" value="1"/>
</dbReference>
<dbReference type="SUPFAM" id="SSF46589">
    <property type="entry name" value="tRNA-binding arm"/>
    <property type="match status" value="1"/>
</dbReference>
<dbReference type="PROSITE" id="PS50862">
    <property type="entry name" value="AA_TRNA_LIGASE_II"/>
    <property type="match status" value="1"/>
</dbReference>
<accession>Q883H8</accession>
<feature type="chain" id="PRO_0000126746" description="Phenylalanine--tRNA ligase alpha subunit">
    <location>
        <begin position="1"/>
        <end position="338"/>
    </location>
</feature>
<feature type="binding site" evidence="1">
    <location>
        <position position="252"/>
    </location>
    <ligand>
        <name>Mg(2+)</name>
        <dbReference type="ChEBI" id="CHEBI:18420"/>
        <note>shared with beta subunit</note>
    </ligand>
</feature>
<protein>
    <recommendedName>
        <fullName evidence="1">Phenylalanine--tRNA ligase alpha subunit</fullName>
        <ecNumber evidence="1">6.1.1.20</ecNumber>
    </recommendedName>
    <alternativeName>
        <fullName evidence="1">Phenylalanyl-tRNA synthetase alpha subunit</fullName>
        <shortName evidence="1">PheRS</shortName>
    </alternativeName>
</protein>
<reference key="1">
    <citation type="journal article" date="2003" name="Proc. Natl. Acad. Sci. U.S.A.">
        <title>The complete genome sequence of the Arabidopsis and tomato pathogen Pseudomonas syringae pv. tomato DC3000.</title>
        <authorList>
            <person name="Buell C.R."/>
            <person name="Joardar V."/>
            <person name="Lindeberg M."/>
            <person name="Selengut J."/>
            <person name="Paulsen I.T."/>
            <person name="Gwinn M.L."/>
            <person name="Dodson R.J."/>
            <person name="DeBoy R.T."/>
            <person name="Durkin A.S."/>
            <person name="Kolonay J.F."/>
            <person name="Madupu R."/>
            <person name="Daugherty S.C."/>
            <person name="Brinkac L.M."/>
            <person name="Beanan M.J."/>
            <person name="Haft D.H."/>
            <person name="Nelson W.C."/>
            <person name="Davidsen T.M."/>
            <person name="Zafar N."/>
            <person name="Zhou L."/>
            <person name="Liu J."/>
            <person name="Yuan Q."/>
            <person name="Khouri H.M."/>
            <person name="Fedorova N.B."/>
            <person name="Tran B."/>
            <person name="Russell D."/>
            <person name="Berry K.J."/>
            <person name="Utterback T.R."/>
            <person name="Van Aken S.E."/>
            <person name="Feldblyum T.V."/>
            <person name="D'Ascenzo M."/>
            <person name="Deng W.-L."/>
            <person name="Ramos A.R."/>
            <person name="Alfano J.R."/>
            <person name="Cartinhour S."/>
            <person name="Chatterjee A.K."/>
            <person name="Delaney T.P."/>
            <person name="Lazarowitz S.G."/>
            <person name="Martin G.B."/>
            <person name="Schneider D.J."/>
            <person name="Tang X."/>
            <person name="Bender C.L."/>
            <person name="White O."/>
            <person name="Fraser C.M."/>
            <person name="Collmer A."/>
        </authorList>
    </citation>
    <scope>NUCLEOTIDE SEQUENCE [LARGE SCALE GENOMIC DNA]</scope>
    <source>
        <strain>ATCC BAA-871 / DC3000</strain>
    </source>
</reference>
<proteinExistence type="inferred from homology"/>
<keyword id="KW-0030">Aminoacyl-tRNA synthetase</keyword>
<keyword id="KW-0067">ATP-binding</keyword>
<keyword id="KW-0963">Cytoplasm</keyword>
<keyword id="KW-0436">Ligase</keyword>
<keyword id="KW-0460">Magnesium</keyword>
<keyword id="KW-0479">Metal-binding</keyword>
<keyword id="KW-0547">Nucleotide-binding</keyword>
<keyword id="KW-0648">Protein biosynthesis</keyword>
<keyword id="KW-1185">Reference proteome</keyword>